<keyword id="KW-0256">Endoplasmic reticulum</keyword>
<keyword id="KW-0378">Hydrolase</keyword>
<keyword id="KW-0443">Lipid metabolism</keyword>
<keyword id="KW-0472">Membrane</keyword>
<keyword id="KW-1185">Reference proteome</keyword>
<keyword id="KW-0812">Transmembrane</keyword>
<keyword id="KW-1133">Transmembrane helix</keyword>
<accession>P59266</accession>
<accession>B9EHX3</accession>
<accession>Q5BKP7</accession>
<evidence type="ECO:0000255" key="1"/>
<evidence type="ECO:0000255" key="2">
    <source>
        <dbReference type="HAMAP-Rule" id="MF_03230"/>
    </source>
</evidence>
<evidence type="ECO:0000269" key="3">
    <source>
    </source>
</evidence>
<evidence type="ECO:0000269" key="4">
    <source>
    </source>
</evidence>
<evidence type="ECO:0000269" key="5">
    <source>
    </source>
</evidence>
<evidence type="ECO:0000269" key="6">
    <source>
    </source>
</evidence>
<evidence type="ECO:0000303" key="7">
    <source>
    </source>
</evidence>
<evidence type="ECO:0000305" key="8"/>
<evidence type="ECO:0000312" key="9">
    <source>
        <dbReference type="MGI" id="MGI:2444508"/>
    </source>
</evidence>
<proteinExistence type="evidence at protein level"/>
<feature type="chain" id="PRO_0000021036" description="Acyl-coenzyme A diphosphatase FITM2">
    <location>
        <begin position="1"/>
        <end position="262"/>
    </location>
</feature>
<feature type="topological domain" description="Cytoplasmic" evidence="8">
    <location>
        <begin position="1"/>
        <end position="23"/>
    </location>
</feature>
<feature type="transmembrane region" description="Helical" evidence="1">
    <location>
        <begin position="24"/>
        <end position="44"/>
    </location>
</feature>
<feature type="topological domain" description="Lumenal" evidence="8">
    <location>
        <begin position="45"/>
        <end position="57"/>
    </location>
</feature>
<feature type="transmembrane region" description="Helical" evidence="1">
    <location>
        <begin position="58"/>
        <end position="78"/>
    </location>
</feature>
<feature type="topological domain" description="Cytoplasmic" evidence="8">
    <location>
        <begin position="79"/>
        <end position="93"/>
    </location>
</feature>
<feature type="transmembrane region" description="Helical" evidence="1">
    <location>
        <begin position="94"/>
        <end position="114"/>
    </location>
</feature>
<feature type="topological domain" description="Lumenal" evidence="8">
    <location>
        <begin position="115"/>
        <end position="145"/>
    </location>
</feature>
<feature type="transmembrane region" description="Helical" evidence="1">
    <location>
        <begin position="146"/>
        <end position="166"/>
    </location>
</feature>
<feature type="topological domain" description="Cytoplasmic" evidence="8">
    <location>
        <begin position="167"/>
        <end position="190"/>
    </location>
</feature>
<feature type="transmembrane region" description="Helical" evidence="1">
    <location>
        <begin position="191"/>
        <end position="211"/>
    </location>
</feature>
<feature type="topological domain" description="Lumenal" evidence="8">
    <location>
        <begin position="212"/>
        <end position="218"/>
    </location>
</feature>
<feature type="transmembrane region" description="Helical" evidence="1">
    <location>
        <begin position="219"/>
        <end position="239"/>
    </location>
</feature>
<feature type="topological domain" description="Cytoplasmic" evidence="8">
    <location>
        <begin position="240"/>
        <end position="262"/>
    </location>
</feature>
<feature type="active site" evidence="2">
    <location>
        <position position="155"/>
    </location>
</feature>
<feature type="active site" evidence="2">
    <location>
        <position position="214"/>
    </location>
</feature>
<feature type="mutagenesis site" description="Decreased specific binding to triglyceride. Decreased lipid droplet size. No change in protein expression levels and subcellular localization to the ER." evidence="4">
    <original>N</original>
    <variation>A</variation>
    <location>
        <position position="80"/>
    </location>
</feature>
<sequence length="262" mass="30016">MEHLERCAWFLRGTLVRATVRRHLPWALVAAMLAGSVVKELSPLPESYLSNKRNVLNVYFVKLAWAWTVCLLLPFIALTNYHLTGKTSLVLRRLSTLLVGTAIWYICTALFSNIEHYTGSCYQSPALEGIRQEHRSKQQCHREGGFWHGFDISGHSFLLTFCALMIVEEMAVLHEVKTDRGHHLHAAITTLVVALGFLTFIWVWMFLCTAVYFHDLTQKVFGTMFGLLGWYGTYGYWYLKSFSPGLPPQSCSLTLKRDTYKK</sequence>
<name>FITM2_MOUSE</name>
<comment type="function">
    <text evidence="2 3 4 5">Fatty acyl-coenzyme A (CoA) diphosphatase that hydrolyzes fatty acyl-CoA to yield acyl-4'-phosphopantetheine and adenosine 3',5'-bisphosphate (By similarity). Preferentially hydrolyzes unsaturated long-chain acyl-CoA substrates such as oleoyl-CoA/(9Z)-octadecenoyl-CoA and arachidonoyl-CoA/(5Z,8Z,11Z,14Z)-eicosatetraenoyl-CoA in the endoplasmic reticulum (ER) lumen (By similarity). This catalytic activity is required for maintaining ER structure and for lipid droplets (LDs) biogenesis, which are lipid storage organelles involved in maintaining lipid and energy homeostasis (By similarity) (PubMed:18160536, PubMed:26504167). Directly binds to diacylglycerol (DAGs) and triacylglycerol, which is also important for LD biogenesis (By similarity) (PubMed:22106267). May support directional budding of nacent LDs from the ER into the cytosol by reducing DAG levels at sites of LD formation (By similarity). Plays a role in the regulation of cell morphology and cytoskeletal organization (By similarity).</text>
</comment>
<comment type="catalytic activity">
    <reaction evidence="2">
        <text>an acyl-CoA + H2O = an acyl-4'-phosphopantetheine + adenosine 3',5'-bisphosphate + 2 H(+)</text>
        <dbReference type="Rhea" id="RHEA:50044"/>
        <dbReference type="ChEBI" id="CHEBI:15377"/>
        <dbReference type="ChEBI" id="CHEBI:15378"/>
        <dbReference type="ChEBI" id="CHEBI:58342"/>
        <dbReference type="ChEBI" id="CHEBI:58343"/>
        <dbReference type="ChEBI" id="CHEBI:132023"/>
    </reaction>
    <physiologicalReaction direction="left-to-right" evidence="2">
        <dbReference type="Rhea" id="RHEA:50045"/>
    </physiologicalReaction>
</comment>
<comment type="catalytic activity">
    <reaction evidence="2">
        <text>(9Z)-octadecenoyl-CoA + H2O = S-(9Z-octadecenoyl)-4'-phosphopantetheine + adenosine 3',5'-bisphosphate + 2 H(+)</text>
        <dbReference type="Rhea" id="RHEA:65564"/>
        <dbReference type="ChEBI" id="CHEBI:15377"/>
        <dbReference type="ChEBI" id="CHEBI:15378"/>
        <dbReference type="ChEBI" id="CHEBI:57387"/>
        <dbReference type="ChEBI" id="CHEBI:58343"/>
        <dbReference type="ChEBI" id="CHEBI:156553"/>
    </reaction>
    <physiologicalReaction direction="left-to-right" evidence="2">
        <dbReference type="Rhea" id="RHEA:65565"/>
    </physiologicalReaction>
</comment>
<comment type="catalytic activity">
    <reaction evidence="2">
        <text>(5Z,8Z,11Z,14Z)-eicosatetraenoyl-CoA + H2O = S-(5Z,8Z,11Z,14Z-eicosatetraenoyl)-4'-phosphopantetheine + adenosine 3',5'-bisphosphate + 2 H(+)</text>
        <dbReference type="Rhea" id="RHEA:65568"/>
        <dbReference type="ChEBI" id="CHEBI:15377"/>
        <dbReference type="ChEBI" id="CHEBI:15378"/>
        <dbReference type="ChEBI" id="CHEBI:57368"/>
        <dbReference type="ChEBI" id="CHEBI:58343"/>
        <dbReference type="ChEBI" id="CHEBI:156554"/>
    </reaction>
    <physiologicalReaction direction="left-to-right" evidence="2">
        <dbReference type="Rhea" id="RHEA:65569"/>
    </physiologicalReaction>
</comment>
<comment type="catalytic activity">
    <reaction evidence="2">
        <text>hexadecanoyl-CoA + H2O = S-hexadecanoyl-4'-phosphopantetheine + adenosine 3',5'-bisphosphate + 2 H(+)</text>
        <dbReference type="Rhea" id="RHEA:50032"/>
        <dbReference type="ChEBI" id="CHEBI:15377"/>
        <dbReference type="ChEBI" id="CHEBI:15378"/>
        <dbReference type="ChEBI" id="CHEBI:57379"/>
        <dbReference type="ChEBI" id="CHEBI:58343"/>
        <dbReference type="ChEBI" id="CHEBI:132018"/>
    </reaction>
    <physiologicalReaction direction="left-to-right" evidence="2">
        <dbReference type="Rhea" id="RHEA:50033"/>
    </physiologicalReaction>
</comment>
<comment type="subcellular location">
    <subcellularLocation>
        <location evidence="3 4">Endoplasmic reticulum membrane</location>
        <topology evidence="2">Multi-pass membrane protein</topology>
    </subcellularLocation>
</comment>
<comment type="tissue specificity">
    <text evidence="3">Widely expressed, with highest levels in white and brown adipose tissues (at protein level). In the heart, mRNA expression levels do not correlate well with protein levels, suggesting post-transcriptional regulation in this organ.</text>
</comment>
<comment type="disruption phenotype">
    <text evidence="6">Homozygous knockout mice display embryonic lethality (PubMed:30923760). Heterozygous knockout mice exhibit shortened left ventricular end-diastolic dimension and shortened left ventricular end-systolic dimension (PubMed:30923760). They also exhibit improved profiles upon pressure overload-induced heart failure (PubMed:30923760).</text>
</comment>
<comment type="similarity">
    <text evidence="2">Belongs to the FIT family.</text>
</comment>
<organism>
    <name type="scientific">Mus musculus</name>
    <name type="common">Mouse</name>
    <dbReference type="NCBI Taxonomy" id="10090"/>
    <lineage>
        <taxon>Eukaryota</taxon>
        <taxon>Metazoa</taxon>
        <taxon>Chordata</taxon>
        <taxon>Craniata</taxon>
        <taxon>Vertebrata</taxon>
        <taxon>Euteleostomi</taxon>
        <taxon>Mammalia</taxon>
        <taxon>Eutheria</taxon>
        <taxon>Euarchontoglires</taxon>
        <taxon>Glires</taxon>
        <taxon>Rodentia</taxon>
        <taxon>Myomorpha</taxon>
        <taxon>Muroidea</taxon>
        <taxon>Muridae</taxon>
        <taxon>Murinae</taxon>
        <taxon>Mus</taxon>
        <taxon>Mus</taxon>
    </lineage>
</organism>
<gene>
    <name evidence="2 9" type="primary">Fitm2</name>
    <name evidence="2" type="synonym">Fit2</name>
</gene>
<protein>
    <recommendedName>
        <fullName evidence="2">Acyl-coenzyme A diphosphatase FITM2</fullName>
        <ecNumber evidence="2">3.6.1.-</ecNumber>
    </recommendedName>
    <alternativeName>
        <fullName evidence="2 7">Fat storage-inducing transmembrane protein 2</fullName>
    </alternativeName>
    <alternativeName>
        <fullName evidence="2">Fat-inducing protein 2</fullName>
    </alternativeName>
</protein>
<reference key="1">
    <citation type="journal article" date="2005" name="Science">
        <title>The transcriptional landscape of the mammalian genome.</title>
        <authorList>
            <person name="Carninci P."/>
            <person name="Kasukawa T."/>
            <person name="Katayama S."/>
            <person name="Gough J."/>
            <person name="Frith M.C."/>
            <person name="Maeda N."/>
            <person name="Oyama R."/>
            <person name="Ravasi T."/>
            <person name="Lenhard B."/>
            <person name="Wells C."/>
            <person name="Kodzius R."/>
            <person name="Shimokawa K."/>
            <person name="Bajic V.B."/>
            <person name="Brenner S.E."/>
            <person name="Batalov S."/>
            <person name="Forrest A.R."/>
            <person name="Zavolan M."/>
            <person name="Davis M.J."/>
            <person name="Wilming L.G."/>
            <person name="Aidinis V."/>
            <person name="Allen J.E."/>
            <person name="Ambesi-Impiombato A."/>
            <person name="Apweiler R."/>
            <person name="Aturaliya R.N."/>
            <person name="Bailey T.L."/>
            <person name="Bansal M."/>
            <person name="Baxter L."/>
            <person name="Beisel K.W."/>
            <person name="Bersano T."/>
            <person name="Bono H."/>
            <person name="Chalk A.M."/>
            <person name="Chiu K.P."/>
            <person name="Choudhary V."/>
            <person name="Christoffels A."/>
            <person name="Clutterbuck D.R."/>
            <person name="Crowe M.L."/>
            <person name="Dalla E."/>
            <person name="Dalrymple B.P."/>
            <person name="de Bono B."/>
            <person name="Della Gatta G."/>
            <person name="di Bernardo D."/>
            <person name="Down T."/>
            <person name="Engstrom P."/>
            <person name="Fagiolini M."/>
            <person name="Faulkner G."/>
            <person name="Fletcher C.F."/>
            <person name="Fukushima T."/>
            <person name="Furuno M."/>
            <person name="Futaki S."/>
            <person name="Gariboldi M."/>
            <person name="Georgii-Hemming P."/>
            <person name="Gingeras T.R."/>
            <person name="Gojobori T."/>
            <person name="Green R.E."/>
            <person name="Gustincich S."/>
            <person name="Harbers M."/>
            <person name="Hayashi Y."/>
            <person name="Hensch T.K."/>
            <person name="Hirokawa N."/>
            <person name="Hill D."/>
            <person name="Huminiecki L."/>
            <person name="Iacono M."/>
            <person name="Ikeo K."/>
            <person name="Iwama A."/>
            <person name="Ishikawa T."/>
            <person name="Jakt M."/>
            <person name="Kanapin A."/>
            <person name="Katoh M."/>
            <person name="Kawasawa Y."/>
            <person name="Kelso J."/>
            <person name="Kitamura H."/>
            <person name="Kitano H."/>
            <person name="Kollias G."/>
            <person name="Krishnan S.P."/>
            <person name="Kruger A."/>
            <person name="Kummerfeld S.K."/>
            <person name="Kurochkin I.V."/>
            <person name="Lareau L.F."/>
            <person name="Lazarevic D."/>
            <person name="Lipovich L."/>
            <person name="Liu J."/>
            <person name="Liuni S."/>
            <person name="McWilliam S."/>
            <person name="Madan Babu M."/>
            <person name="Madera M."/>
            <person name="Marchionni L."/>
            <person name="Matsuda H."/>
            <person name="Matsuzawa S."/>
            <person name="Miki H."/>
            <person name="Mignone F."/>
            <person name="Miyake S."/>
            <person name="Morris K."/>
            <person name="Mottagui-Tabar S."/>
            <person name="Mulder N."/>
            <person name="Nakano N."/>
            <person name="Nakauchi H."/>
            <person name="Ng P."/>
            <person name="Nilsson R."/>
            <person name="Nishiguchi S."/>
            <person name="Nishikawa S."/>
            <person name="Nori F."/>
            <person name="Ohara O."/>
            <person name="Okazaki Y."/>
            <person name="Orlando V."/>
            <person name="Pang K.C."/>
            <person name="Pavan W.J."/>
            <person name="Pavesi G."/>
            <person name="Pesole G."/>
            <person name="Petrovsky N."/>
            <person name="Piazza S."/>
            <person name="Reed J."/>
            <person name="Reid J.F."/>
            <person name="Ring B.Z."/>
            <person name="Ringwald M."/>
            <person name="Rost B."/>
            <person name="Ruan Y."/>
            <person name="Salzberg S.L."/>
            <person name="Sandelin A."/>
            <person name="Schneider C."/>
            <person name="Schoenbach C."/>
            <person name="Sekiguchi K."/>
            <person name="Semple C.A."/>
            <person name="Seno S."/>
            <person name="Sessa L."/>
            <person name="Sheng Y."/>
            <person name="Shibata Y."/>
            <person name="Shimada H."/>
            <person name="Shimada K."/>
            <person name="Silva D."/>
            <person name="Sinclair B."/>
            <person name="Sperling S."/>
            <person name="Stupka E."/>
            <person name="Sugiura K."/>
            <person name="Sultana R."/>
            <person name="Takenaka Y."/>
            <person name="Taki K."/>
            <person name="Tammoja K."/>
            <person name="Tan S.L."/>
            <person name="Tang S."/>
            <person name="Taylor M.S."/>
            <person name="Tegner J."/>
            <person name="Teichmann S.A."/>
            <person name="Ueda H.R."/>
            <person name="van Nimwegen E."/>
            <person name="Verardo R."/>
            <person name="Wei C.L."/>
            <person name="Yagi K."/>
            <person name="Yamanishi H."/>
            <person name="Zabarovsky E."/>
            <person name="Zhu S."/>
            <person name="Zimmer A."/>
            <person name="Hide W."/>
            <person name="Bult C."/>
            <person name="Grimmond S.M."/>
            <person name="Teasdale R.D."/>
            <person name="Liu E.T."/>
            <person name="Brusic V."/>
            <person name="Quackenbush J."/>
            <person name="Wahlestedt C."/>
            <person name="Mattick J.S."/>
            <person name="Hume D.A."/>
            <person name="Kai C."/>
            <person name="Sasaki D."/>
            <person name="Tomaru Y."/>
            <person name="Fukuda S."/>
            <person name="Kanamori-Katayama M."/>
            <person name="Suzuki M."/>
            <person name="Aoki J."/>
            <person name="Arakawa T."/>
            <person name="Iida J."/>
            <person name="Imamura K."/>
            <person name="Itoh M."/>
            <person name="Kato T."/>
            <person name="Kawaji H."/>
            <person name="Kawagashira N."/>
            <person name="Kawashima T."/>
            <person name="Kojima M."/>
            <person name="Kondo S."/>
            <person name="Konno H."/>
            <person name="Nakano K."/>
            <person name="Ninomiya N."/>
            <person name="Nishio T."/>
            <person name="Okada M."/>
            <person name="Plessy C."/>
            <person name="Shibata K."/>
            <person name="Shiraki T."/>
            <person name="Suzuki S."/>
            <person name="Tagami M."/>
            <person name="Waki K."/>
            <person name="Watahiki A."/>
            <person name="Okamura-Oho Y."/>
            <person name="Suzuki H."/>
            <person name="Kawai J."/>
            <person name="Hayashizaki Y."/>
        </authorList>
    </citation>
    <scope>NUCLEOTIDE SEQUENCE [LARGE SCALE MRNA]</scope>
    <source>
        <strain>C57BL/6J</strain>
        <tissue>Adipose tissue</tissue>
        <tissue>Cerebellum</tissue>
    </source>
</reference>
<reference key="2">
    <citation type="journal article" date="2009" name="PLoS Biol.">
        <title>Lineage-specific biology revealed by a finished genome assembly of the mouse.</title>
        <authorList>
            <person name="Church D.M."/>
            <person name="Goodstadt L."/>
            <person name="Hillier L.W."/>
            <person name="Zody M.C."/>
            <person name="Goldstein S."/>
            <person name="She X."/>
            <person name="Bult C.J."/>
            <person name="Agarwala R."/>
            <person name="Cherry J.L."/>
            <person name="DiCuccio M."/>
            <person name="Hlavina W."/>
            <person name="Kapustin Y."/>
            <person name="Meric P."/>
            <person name="Maglott D."/>
            <person name="Birtle Z."/>
            <person name="Marques A.C."/>
            <person name="Graves T."/>
            <person name="Zhou S."/>
            <person name="Teague B."/>
            <person name="Potamousis K."/>
            <person name="Churas C."/>
            <person name="Place M."/>
            <person name="Herschleb J."/>
            <person name="Runnheim R."/>
            <person name="Forrest D."/>
            <person name="Amos-Landgraf J."/>
            <person name="Schwartz D.C."/>
            <person name="Cheng Z."/>
            <person name="Lindblad-Toh K."/>
            <person name="Eichler E.E."/>
            <person name="Ponting C.P."/>
        </authorList>
    </citation>
    <scope>NUCLEOTIDE SEQUENCE [LARGE SCALE GENOMIC DNA]</scope>
    <source>
        <strain>C57BL/6J</strain>
    </source>
</reference>
<reference key="3">
    <citation type="journal article" date="2004" name="Genome Res.">
        <title>The status, quality, and expansion of the NIH full-length cDNA project: the Mammalian Gene Collection (MGC).</title>
        <authorList>
            <consortium name="The MGC Project Team"/>
        </authorList>
    </citation>
    <scope>NUCLEOTIDE SEQUENCE [LARGE SCALE MRNA]</scope>
    <source>
        <tissue>Brain</tissue>
    </source>
</reference>
<reference key="4">
    <citation type="journal article" date="2008" name="Proc. Natl. Acad. Sci. U.S.A.">
        <title>Evolutionarily conserved gene family important for fat storage.</title>
        <authorList>
            <person name="Kadereit B."/>
            <person name="Kumar P."/>
            <person name="Wang W.-J."/>
            <person name="Miranda D."/>
            <person name="Snapp E.L."/>
            <person name="Severina N."/>
            <person name="Torregroza I."/>
            <person name="Evans T."/>
            <person name="Silver D.L."/>
        </authorList>
    </citation>
    <scope>FUNCTION</scope>
    <scope>SUBCELLULAR LOCATION</scope>
    <scope>TISSUE SPECIFICITY</scope>
</reference>
<reference key="5">
    <citation type="journal article" date="2010" name="Cell">
        <title>A tissue-specific atlas of mouse protein phosphorylation and expression.</title>
        <authorList>
            <person name="Huttlin E.L."/>
            <person name="Jedrychowski M.P."/>
            <person name="Elias J.E."/>
            <person name="Goswami T."/>
            <person name="Rad R."/>
            <person name="Beausoleil S.A."/>
            <person name="Villen J."/>
            <person name="Haas W."/>
            <person name="Sowa M.E."/>
            <person name="Gygi S.P."/>
        </authorList>
    </citation>
    <scope>IDENTIFICATION BY MASS SPECTROMETRY [LARGE SCALE ANALYSIS]</scope>
    <source>
        <tissue>Heart</tissue>
        <tissue>Kidney</tissue>
        <tissue>Liver</tissue>
    </source>
</reference>
<reference key="6">
    <citation type="journal article" date="2011" name="Proc. Natl. Acad. Sci. U.S.A.">
        <title>Direct binding of triglyceride to fat storage-inducing transmembrane proteins 1 and 2 is important for lipid droplet formation.</title>
        <authorList>
            <person name="Gross D.A."/>
            <person name="Zhan C."/>
            <person name="Silver D.L."/>
        </authorList>
    </citation>
    <scope>FUNCTION</scope>
    <scope>SUBCELLULAR LOCATION</scope>
    <scope>MUTAGENESIS OF ASN-80</scope>
</reference>
<reference key="7">
    <citation type="journal article" date="2015" name="J. Cell Biol.">
        <title>A conserved family of proteins facilitates nascent lipid droplet budding from the ER.</title>
        <authorList>
            <person name="Choudhary V."/>
            <person name="Ojha N."/>
            <person name="Golden A."/>
            <person name="Prinz W.A."/>
        </authorList>
    </citation>
    <scope>FUNCTION</scope>
</reference>
<reference key="8">
    <citation type="journal article" date="2019" name="Heliyon">
        <title>Mice lacking fat storage-inducing transmembrane protein 2 show improved profiles upon pressure overload-induced heart failure.</title>
        <authorList>
            <person name="Nishihama N."/>
            <person name="Nagayama T."/>
            <person name="Makino S."/>
            <person name="Koishi R."/>
        </authorList>
    </citation>
    <scope>DISRUPTION PHENOTYPE</scope>
</reference>
<dbReference type="EC" id="3.6.1.-" evidence="2"/>
<dbReference type="EMBL" id="AK040900">
    <property type="protein sequence ID" value="BAC30737.1"/>
    <property type="molecule type" value="mRNA"/>
</dbReference>
<dbReference type="EMBL" id="AK043244">
    <property type="protein sequence ID" value="BAC31503.1"/>
    <property type="molecule type" value="mRNA"/>
</dbReference>
<dbReference type="EMBL" id="AK163611">
    <property type="protein sequence ID" value="BAE37420.1"/>
    <property type="molecule type" value="mRNA"/>
</dbReference>
<dbReference type="EMBL" id="AL591488">
    <property type="status" value="NOT_ANNOTATED_CDS"/>
    <property type="molecule type" value="Genomic_DNA"/>
</dbReference>
<dbReference type="EMBL" id="BC090994">
    <property type="protein sequence ID" value="AAH90994.1"/>
    <property type="molecule type" value="mRNA"/>
</dbReference>
<dbReference type="EMBL" id="BC138522">
    <property type="protein sequence ID" value="AAI38523.1"/>
    <property type="molecule type" value="mRNA"/>
</dbReference>
<dbReference type="EMBL" id="BC138532">
    <property type="protein sequence ID" value="AAI38533.1"/>
    <property type="molecule type" value="mRNA"/>
</dbReference>
<dbReference type="CCDS" id="CCDS38315.1"/>
<dbReference type="RefSeq" id="NP_775573.1">
    <property type="nucleotide sequence ID" value="NM_173397.4"/>
</dbReference>
<dbReference type="BioGRID" id="230786">
    <property type="interactions" value="259"/>
</dbReference>
<dbReference type="FunCoup" id="P59266">
    <property type="interactions" value="1341"/>
</dbReference>
<dbReference type="STRING" id="10090.ENSMUSP00000105045"/>
<dbReference type="iPTMnet" id="P59266"/>
<dbReference type="PhosphoSitePlus" id="P59266"/>
<dbReference type="jPOST" id="P59266"/>
<dbReference type="PaxDb" id="10090-ENSMUSP00000105045"/>
<dbReference type="PeptideAtlas" id="P59266"/>
<dbReference type="ProteomicsDB" id="267590"/>
<dbReference type="Pumba" id="P59266"/>
<dbReference type="DNASU" id="228859"/>
<dbReference type="Ensembl" id="ENSMUST00000109418.2">
    <property type="protein sequence ID" value="ENSMUSP00000105045.2"/>
    <property type="gene ID" value="ENSMUSG00000048486.7"/>
</dbReference>
<dbReference type="GeneID" id="228859"/>
<dbReference type="KEGG" id="mmu:228859"/>
<dbReference type="UCSC" id="uc008nsv.1">
    <property type="organism name" value="mouse"/>
</dbReference>
<dbReference type="AGR" id="MGI:2444508"/>
<dbReference type="CTD" id="128486"/>
<dbReference type="MGI" id="MGI:2444508">
    <property type="gene designation" value="Fitm2"/>
</dbReference>
<dbReference type="VEuPathDB" id="HostDB:ENSMUSG00000048486"/>
<dbReference type="eggNOG" id="KOG3750">
    <property type="taxonomic scope" value="Eukaryota"/>
</dbReference>
<dbReference type="GeneTree" id="ENSGT00530000063693"/>
<dbReference type="HOGENOM" id="CLU_049499_1_1_1"/>
<dbReference type="InParanoid" id="P59266"/>
<dbReference type="OMA" id="TYRFWYL"/>
<dbReference type="OrthoDB" id="5579088at2759"/>
<dbReference type="PhylomeDB" id="P59266"/>
<dbReference type="Reactome" id="R-MMU-8964572">
    <property type="pathway name" value="Lipid particle organization"/>
</dbReference>
<dbReference type="BioGRID-ORCS" id="228859">
    <property type="hits" value="18 hits in 79 CRISPR screens"/>
</dbReference>
<dbReference type="ChiTaRS" id="Fitm2">
    <property type="organism name" value="mouse"/>
</dbReference>
<dbReference type="PRO" id="PR:P59266"/>
<dbReference type="Proteomes" id="UP000000589">
    <property type="component" value="Chromosome 2"/>
</dbReference>
<dbReference type="RNAct" id="P59266">
    <property type="molecule type" value="protein"/>
</dbReference>
<dbReference type="Bgee" id="ENSMUSG00000048486">
    <property type="expression patterns" value="Expressed in interventricular septum and 198 other cell types or tissues"/>
</dbReference>
<dbReference type="GO" id="GO:0005789">
    <property type="term" value="C:endoplasmic reticulum membrane"/>
    <property type="evidence" value="ECO:0000314"/>
    <property type="project" value="UniProtKB"/>
</dbReference>
<dbReference type="GO" id="GO:0005739">
    <property type="term" value="C:mitochondrion"/>
    <property type="evidence" value="ECO:0007005"/>
    <property type="project" value="MGI"/>
</dbReference>
<dbReference type="GO" id="GO:0010945">
    <property type="term" value="F:coenzyme A diphosphatase activity"/>
    <property type="evidence" value="ECO:0000250"/>
    <property type="project" value="UniProtKB"/>
</dbReference>
<dbReference type="GO" id="GO:0019992">
    <property type="term" value="F:diacylglycerol binding"/>
    <property type="evidence" value="ECO:0000314"/>
    <property type="project" value="UniProtKB"/>
</dbReference>
<dbReference type="GO" id="GO:0017129">
    <property type="term" value="F:triglyceride binding"/>
    <property type="evidence" value="ECO:0000314"/>
    <property type="project" value="UniProtKB"/>
</dbReference>
<dbReference type="GO" id="GO:0007010">
    <property type="term" value="P:cytoskeleton organization"/>
    <property type="evidence" value="ECO:0000250"/>
    <property type="project" value="UniProtKB"/>
</dbReference>
<dbReference type="GO" id="GO:0045444">
    <property type="term" value="P:fat cell differentiation"/>
    <property type="evidence" value="ECO:0000314"/>
    <property type="project" value="BHF-UCL"/>
</dbReference>
<dbReference type="GO" id="GO:0036115">
    <property type="term" value="P:fatty-acyl-CoA catabolic process"/>
    <property type="evidence" value="ECO:0000250"/>
    <property type="project" value="UniProtKB"/>
</dbReference>
<dbReference type="GO" id="GO:0035356">
    <property type="term" value="P:intracellular triglyceride homeostasis"/>
    <property type="evidence" value="ECO:0000315"/>
    <property type="project" value="BHF-UCL"/>
</dbReference>
<dbReference type="GO" id="GO:0140042">
    <property type="term" value="P:lipid droplet formation"/>
    <property type="evidence" value="ECO:0000314"/>
    <property type="project" value="UniProtKB"/>
</dbReference>
<dbReference type="GO" id="GO:0034389">
    <property type="term" value="P:lipid droplet organization"/>
    <property type="evidence" value="ECO:0000314"/>
    <property type="project" value="BHF-UCL"/>
</dbReference>
<dbReference type="GO" id="GO:0055088">
    <property type="term" value="P:lipid homeostasis"/>
    <property type="evidence" value="ECO:0000250"/>
    <property type="project" value="UniProtKB"/>
</dbReference>
<dbReference type="GO" id="GO:0022604">
    <property type="term" value="P:regulation of cell morphogenesis"/>
    <property type="evidence" value="ECO:0000250"/>
    <property type="project" value="UniProtKB"/>
</dbReference>
<dbReference type="GO" id="GO:0006641">
    <property type="term" value="P:triglyceride metabolic process"/>
    <property type="evidence" value="ECO:0000315"/>
    <property type="project" value="BHF-UCL"/>
</dbReference>
<dbReference type="GO" id="GO:0030730">
    <property type="term" value="P:triglyceride storage"/>
    <property type="evidence" value="ECO:0000315"/>
    <property type="project" value="MGI"/>
</dbReference>
<dbReference type="HAMAP" id="MF_03230">
    <property type="entry name" value="FITM2"/>
    <property type="match status" value="1"/>
</dbReference>
<dbReference type="InterPro" id="IPR019388">
    <property type="entry name" value="FIT"/>
</dbReference>
<dbReference type="InterPro" id="IPR046401">
    <property type="entry name" value="FITM1/2"/>
</dbReference>
<dbReference type="PANTHER" id="PTHR23129">
    <property type="entry name" value="ACYL-COENZYME A DIPHOSPHATASE FITM2"/>
    <property type="match status" value="1"/>
</dbReference>
<dbReference type="PANTHER" id="PTHR23129:SF1">
    <property type="entry name" value="ACYL-COENZYME A DIPHOSPHATASE FITM2"/>
    <property type="match status" value="1"/>
</dbReference>
<dbReference type="Pfam" id="PF10261">
    <property type="entry name" value="FIT"/>
    <property type="match status" value="2"/>
</dbReference>